<name>RL33_ANAPZ</name>
<organism>
    <name type="scientific">Anaplasma phagocytophilum (strain HZ)</name>
    <dbReference type="NCBI Taxonomy" id="212042"/>
    <lineage>
        <taxon>Bacteria</taxon>
        <taxon>Pseudomonadati</taxon>
        <taxon>Pseudomonadota</taxon>
        <taxon>Alphaproteobacteria</taxon>
        <taxon>Rickettsiales</taxon>
        <taxon>Anaplasmataceae</taxon>
        <taxon>Anaplasma</taxon>
        <taxon>phagocytophilum group</taxon>
    </lineage>
</organism>
<keyword id="KW-0687">Ribonucleoprotein</keyword>
<keyword id="KW-0689">Ribosomal protein</keyword>
<sequence length="56" mass="6555">MAKKGATLLVKLVSSEGTGYFYVKKRDPKKLVQKLSFRKYDPVARKHVLFKEEKLR</sequence>
<dbReference type="EMBL" id="CP000235">
    <property type="protein sequence ID" value="ABD44399.1"/>
    <property type="molecule type" value="Genomic_DNA"/>
</dbReference>
<dbReference type="RefSeq" id="WP_011451011.1">
    <property type="nucleotide sequence ID" value="NC_007797.1"/>
</dbReference>
<dbReference type="SMR" id="Q2GJF3"/>
<dbReference type="STRING" id="212042.APH_0925"/>
<dbReference type="PaxDb" id="212042-APH_0925"/>
<dbReference type="EnsemblBacteria" id="ABD44399">
    <property type="protein sequence ID" value="ABD44399"/>
    <property type="gene ID" value="APH_0925"/>
</dbReference>
<dbReference type="GeneID" id="92748111"/>
<dbReference type="KEGG" id="aph:APH_0925"/>
<dbReference type="eggNOG" id="COG0267">
    <property type="taxonomic scope" value="Bacteria"/>
</dbReference>
<dbReference type="HOGENOM" id="CLU_190949_1_0_5"/>
<dbReference type="Proteomes" id="UP000001943">
    <property type="component" value="Chromosome"/>
</dbReference>
<dbReference type="GO" id="GO:0005737">
    <property type="term" value="C:cytoplasm"/>
    <property type="evidence" value="ECO:0007669"/>
    <property type="project" value="UniProtKB-ARBA"/>
</dbReference>
<dbReference type="GO" id="GO:0015934">
    <property type="term" value="C:large ribosomal subunit"/>
    <property type="evidence" value="ECO:0007669"/>
    <property type="project" value="TreeGrafter"/>
</dbReference>
<dbReference type="GO" id="GO:0003735">
    <property type="term" value="F:structural constituent of ribosome"/>
    <property type="evidence" value="ECO:0007669"/>
    <property type="project" value="InterPro"/>
</dbReference>
<dbReference type="GO" id="GO:0006412">
    <property type="term" value="P:translation"/>
    <property type="evidence" value="ECO:0007669"/>
    <property type="project" value="UniProtKB-UniRule"/>
</dbReference>
<dbReference type="Gene3D" id="2.20.28.120">
    <property type="entry name" value="Ribosomal protein L33"/>
    <property type="match status" value="1"/>
</dbReference>
<dbReference type="HAMAP" id="MF_00294">
    <property type="entry name" value="Ribosomal_bL33"/>
    <property type="match status" value="1"/>
</dbReference>
<dbReference type="InterPro" id="IPR001705">
    <property type="entry name" value="Ribosomal_bL33"/>
</dbReference>
<dbReference type="InterPro" id="IPR038584">
    <property type="entry name" value="Ribosomal_bL33_sf"/>
</dbReference>
<dbReference type="InterPro" id="IPR011332">
    <property type="entry name" value="Ribosomal_zn-bd"/>
</dbReference>
<dbReference type="NCBIfam" id="NF001860">
    <property type="entry name" value="PRK00595.1"/>
    <property type="match status" value="1"/>
</dbReference>
<dbReference type="NCBIfam" id="TIGR01023">
    <property type="entry name" value="rpmG_bact"/>
    <property type="match status" value="1"/>
</dbReference>
<dbReference type="PANTHER" id="PTHR15238">
    <property type="entry name" value="54S RIBOSOMAL PROTEIN L39, MITOCHONDRIAL"/>
    <property type="match status" value="1"/>
</dbReference>
<dbReference type="PANTHER" id="PTHR15238:SF1">
    <property type="entry name" value="LARGE RIBOSOMAL SUBUNIT PROTEIN BL33M"/>
    <property type="match status" value="1"/>
</dbReference>
<dbReference type="Pfam" id="PF00471">
    <property type="entry name" value="Ribosomal_L33"/>
    <property type="match status" value="1"/>
</dbReference>
<dbReference type="SUPFAM" id="SSF57829">
    <property type="entry name" value="Zn-binding ribosomal proteins"/>
    <property type="match status" value="1"/>
</dbReference>
<evidence type="ECO:0000255" key="1">
    <source>
        <dbReference type="HAMAP-Rule" id="MF_00294"/>
    </source>
</evidence>
<evidence type="ECO:0000305" key="2"/>
<comment type="similarity">
    <text evidence="1">Belongs to the bacterial ribosomal protein bL33 family.</text>
</comment>
<reference key="1">
    <citation type="journal article" date="2006" name="PLoS Genet.">
        <title>Comparative genomics of emerging human ehrlichiosis agents.</title>
        <authorList>
            <person name="Dunning Hotopp J.C."/>
            <person name="Lin M."/>
            <person name="Madupu R."/>
            <person name="Crabtree J."/>
            <person name="Angiuoli S.V."/>
            <person name="Eisen J.A."/>
            <person name="Seshadri R."/>
            <person name="Ren Q."/>
            <person name="Wu M."/>
            <person name="Utterback T.R."/>
            <person name="Smith S."/>
            <person name="Lewis M."/>
            <person name="Khouri H."/>
            <person name="Zhang C."/>
            <person name="Niu H."/>
            <person name="Lin Q."/>
            <person name="Ohashi N."/>
            <person name="Zhi N."/>
            <person name="Nelson W.C."/>
            <person name="Brinkac L.M."/>
            <person name="Dodson R.J."/>
            <person name="Rosovitz M.J."/>
            <person name="Sundaram J.P."/>
            <person name="Daugherty S.C."/>
            <person name="Davidsen T."/>
            <person name="Durkin A.S."/>
            <person name="Gwinn M.L."/>
            <person name="Haft D.H."/>
            <person name="Selengut J.D."/>
            <person name="Sullivan S.A."/>
            <person name="Zafar N."/>
            <person name="Zhou L."/>
            <person name="Benahmed F."/>
            <person name="Forberger H."/>
            <person name="Halpin R."/>
            <person name="Mulligan S."/>
            <person name="Robinson J."/>
            <person name="White O."/>
            <person name="Rikihisa Y."/>
            <person name="Tettelin H."/>
        </authorList>
    </citation>
    <scope>NUCLEOTIDE SEQUENCE [LARGE SCALE GENOMIC DNA]</scope>
    <source>
        <strain>HZ</strain>
    </source>
</reference>
<gene>
    <name evidence="1" type="primary">rpmG</name>
    <name type="ordered locus">APH_0925</name>
</gene>
<accession>Q2GJF3</accession>
<feature type="chain" id="PRO_1000004139" description="Large ribosomal subunit protein bL33">
    <location>
        <begin position="1"/>
        <end position="56"/>
    </location>
</feature>
<protein>
    <recommendedName>
        <fullName evidence="1">Large ribosomal subunit protein bL33</fullName>
    </recommendedName>
    <alternativeName>
        <fullName evidence="2">50S ribosomal protein L33</fullName>
    </alternativeName>
</protein>
<proteinExistence type="inferred from homology"/>